<name>SRA1_HUMAN</name>
<dbReference type="EMBL" id="AF293024">
    <property type="protein sequence ID" value="AAG02114.1"/>
    <property type="status" value="ALT_INIT"/>
    <property type="molecule type" value="mRNA"/>
</dbReference>
<dbReference type="EMBL" id="AF293025">
    <property type="protein sequence ID" value="AAG02115.1"/>
    <property type="status" value="ALT_INIT"/>
    <property type="molecule type" value="mRNA"/>
</dbReference>
<dbReference type="EMBL" id="AF293026">
    <property type="protein sequence ID" value="AAG02116.1"/>
    <property type="status" value="ALT_INIT"/>
    <property type="molecule type" value="mRNA"/>
</dbReference>
<dbReference type="EMBL" id="AF318361">
    <property type="protein sequence ID" value="AAL55868.1"/>
    <property type="status" value="ALT_INIT"/>
    <property type="molecule type" value="mRNA"/>
</dbReference>
<dbReference type="EMBL" id="AF092038">
    <property type="status" value="NOT_ANNOTATED_CDS"/>
    <property type="molecule type" value="mRNA"/>
</dbReference>
<dbReference type="EMBL" id="BC040043">
    <property type="protein sequence ID" value="AAH40043.2"/>
    <property type="status" value="ALT_FRAME"/>
    <property type="molecule type" value="mRNA"/>
</dbReference>
<dbReference type="CCDS" id="CCDS34245.2"/>
<dbReference type="RefSeq" id="NP_001030312.3">
    <property type="nucleotide sequence ID" value="NM_001035235.4"/>
</dbReference>
<dbReference type="PDB" id="2MGX">
    <property type="method" value="NMR"/>
    <property type="chains" value="A=95-224"/>
</dbReference>
<dbReference type="PDB" id="4NBO">
    <property type="method" value="X-ray"/>
    <property type="resolution" value="2.81 A"/>
    <property type="chains" value="A/B=94-203"/>
</dbReference>
<dbReference type="PDBsum" id="2MGX"/>
<dbReference type="PDBsum" id="4NBO"/>
<dbReference type="BMRB" id="Q9HD15"/>
<dbReference type="SMR" id="Q9HD15"/>
<dbReference type="BioGRID" id="115329">
    <property type="interactions" value="82"/>
</dbReference>
<dbReference type="CORUM" id="Q9HD15"/>
<dbReference type="FunCoup" id="Q9HD15">
    <property type="interactions" value="556"/>
</dbReference>
<dbReference type="IntAct" id="Q9HD15">
    <property type="interactions" value="19"/>
</dbReference>
<dbReference type="MINT" id="Q9HD15"/>
<dbReference type="STRING" id="9606.ENSP00000337513"/>
<dbReference type="GlyGen" id="Q9HD15">
    <property type="glycosylation" value="1 site, 1 O-linked glycan (1 site)"/>
</dbReference>
<dbReference type="iPTMnet" id="Q9HD15"/>
<dbReference type="PhosphoSitePlus" id="Q9HD15"/>
<dbReference type="BioMuta" id="SRA1"/>
<dbReference type="DMDM" id="74718904"/>
<dbReference type="jPOST" id="Q9HD15"/>
<dbReference type="MassIVE" id="Q9HD15"/>
<dbReference type="PaxDb" id="9606-ENSP00000337513"/>
<dbReference type="PeptideAtlas" id="Q9HD15"/>
<dbReference type="ProteomicsDB" id="81809"/>
<dbReference type="Pumba" id="Q9HD15"/>
<dbReference type="Antibodypedia" id="26969">
    <property type="antibodies" value="225 antibodies from 32 providers"/>
</dbReference>
<dbReference type="DNASU" id="10011"/>
<dbReference type="Ensembl" id="ENST00000336283.9">
    <property type="protein sequence ID" value="ENSP00000337513.6"/>
    <property type="gene ID" value="ENSG00000213523.12"/>
</dbReference>
<dbReference type="GeneID" id="10011"/>
<dbReference type="KEGG" id="hsa:10011"/>
<dbReference type="MANE-Select" id="ENST00000336283.9">
    <property type="protein sequence ID" value="ENSP00000337513.6"/>
    <property type="RefSeq nucleotide sequence ID" value="NM_001035235.4"/>
    <property type="RefSeq protein sequence ID" value="NP_001030312.3"/>
</dbReference>
<dbReference type="UCSC" id="uc003lga.4">
    <property type="organism name" value="human"/>
</dbReference>
<dbReference type="AGR" id="HGNC:11281"/>
<dbReference type="CTD" id="10011"/>
<dbReference type="DisGeNET" id="10011"/>
<dbReference type="GeneCards" id="SRA1"/>
<dbReference type="GeneReviews" id="SRA1"/>
<dbReference type="HGNC" id="HGNC:11281">
    <property type="gene designation" value="SRA1"/>
</dbReference>
<dbReference type="HPA" id="ENSG00000213523">
    <property type="expression patterns" value="Low tissue specificity"/>
</dbReference>
<dbReference type="MalaCards" id="SRA1"/>
<dbReference type="MIM" id="603819">
    <property type="type" value="gene"/>
</dbReference>
<dbReference type="neXtProt" id="NX_Q9HD15"/>
<dbReference type="OpenTargets" id="ENSG00000213523"/>
<dbReference type="PharmGKB" id="PA36110"/>
<dbReference type="VEuPathDB" id="HostDB:ENSG00000213523"/>
<dbReference type="eggNOG" id="ENOG502RZ38">
    <property type="taxonomic scope" value="Eukaryota"/>
</dbReference>
<dbReference type="GeneTree" id="ENSGT00390000001803"/>
<dbReference type="HOGENOM" id="CLU_081395_0_0_1"/>
<dbReference type="InParanoid" id="Q9HD15"/>
<dbReference type="OrthoDB" id="5982138at2759"/>
<dbReference type="PAN-GO" id="Q9HD15">
    <property type="GO annotations" value="2 GO annotations based on evolutionary models"/>
</dbReference>
<dbReference type="PhylomeDB" id="Q9HD15"/>
<dbReference type="TreeFam" id="TF314789"/>
<dbReference type="PathwayCommons" id="Q9HD15"/>
<dbReference type="SignaLink" id="Q9HD15"/>
<dbReference type="BioGRID-ORCS" id="10011">
    <property type="hits" value="12 hits in 1155 CRISPR screens"/>
</dbReference>
<dbReference type="EvolutionaryTrace" id="Q9HD15"/>
<dbReference type="GeneWiki" id="SRA1"/>
<dbReference type="GenomeRNAi" id="10011"/>
<dbReference type="Pharos" id="Q9HD15">
    <property type="development level" value="Tbio"/>
</dbReference>
<dbReference type="PRO" id="PR:Q9HD15"/>
<dbReference type="Proteomes" id="UP000005640">
    <property type="component" value="Chromosome 5"/>
</dbReference>
<dbReference type="RNAct" id="Q9HD15">
    <property type="molecule type" value="protein"/>
</dbReference>
<dbReference type="Bgee" id="ENSG00000213523">
    <property type="expression patterns" value="Expressed in pancreatic ductal cell and 180 other cell types or tissues"/>
</dbReference>
<dbReference type="ExpressionAtlas" id="Q9HD15">
    <property type="expression patterns" value="baseline and differential"/>
</dbReference>
<dbReference type="GO" id="GO:0005929">
    <property type="term" value="C:cilium"/>
    <property type="evidence" value="ECO:0000314"/>
    <property type="project" value="HPA"/>
</dbReference>
<dbReference type="GO" id="GO:0005737">
    <property type="term" value="C:cytoplasm"/>
    <property type="evidence" value="ECO:0000314"/>
    <property type="project" value="UniProtKB"/>
</dbReference>
<dbReference type="GO" id="GO:0005829">
    <property type="term" value="C:cytosol"/>
    <property type="evidence" value="ECO:0000314"/>
    <property type="project" value="HPA"/>
</dbReference>
<dbReference type="GO" id="GO:0045171">
    <property type="term" value="C:intercellular bridge"/>
    <property type="evidence" value="ECO:0000314"/>
    <property type="project" value="HPA"/>
</dbReference>
<dbReference type="GO" id="GO:0043231">
    <property type="term" value="C:intracellular membrane-bounded organelle"/>
    <property type="evidence" value="ECO:0000314"/>
    <property type="project" value="HPA"/>
</dbReference>
<dbReference type="GO" id="GO:0015630">
    <property type="term" value="C:microtubule cytoskeleton"/>
    <property type="evidence" value="ECO:0000314"/>
    <property type="project" value="HPA"/>
</dbReference>
<dbReference type="GO" id="GO:0005654">
    <property type="term" value="C:nucleoplasm"/>
    <property type="evidence" value="ECO:0000314"/>
    <property type="project" value="HPA"/>
</dbReference>
<dbReference type="GO" id="GO:0005634">
    <property type="term" value="C:nucleus"/>
    <property type="evidence" value="ECO:0000314"/>
    <property type="project" value="UniProtKB"/>
</dbReference>
<dbReference type="GO" id="GO:0005886">
    <property type="term" value="C:plasma membrane"/>
    <property type="evidence" value="ECO:0000314"/>
    <property type="project" value="HPA"/>
</dbReference>
<dbReference type="GO" id="GO:0002153">
    <property type="term" value="F:steroid receptor RNA activator RNA binding"/>
    <property type="evidence" value="ECO:0000314"/>
    <property type="project" value="UniProtKB"/>
</dbReference>
<dbReference type="GO" id="GO:0003713">
    <property type="term" value="F:transcription coactivator activity"/>
    <property type="evidence" value="ECO:0000318"/>
    <property type="project" value="GO_Central"/>
</dbReference>
<dbReference type="GO" id="GO:0006915">
    <property type="term" value="P:apoptotic process"/>
    <property type="evidence" value="ECO:0007669"/>
    <property type="project" value="UniProtKB-KW"/>
</dbReference>
<dbReference type="GO" id="GO:0045662">
    <property type="term" value="P:negative regulation of myoblast differentiation"/>
    <property type="evidence" value="ECO:0000315"/>
    <property type="project" value="UniProtKB"/>
</dbReference>
<dbReference type="FunFam" id="1.20.940.10:FF:000006">
    <property type="entry name" value="steroid receptor RNA activator 1"/>
    <property type="match status" value="1"/>
</dbReference>
<dbReference type="Gene3D" id="1.20.940.10">
    <property type="entry name" value="Functional domain of the splicing factor Prp18"/>
    <property type="match status" value="1"/>
</dbReference>
<dbReference type="IDEAL" id="IID00683"/>
<dbReference type="InterPro" id="IPR009917">
    <property type="entry name" value="SRA1/Sec31"/>
</dbReference>
<dbReference type="InterPro" id="IPR040243">
    <property type="entry name" value="Steroid_recept_RNA_1"/>
</dbReference>
<dbReference type="PANTHER" id="PTHR18834">
    <property type="entry name" value="STEROID RECEPTOR RNA ACTIVATOR 1"/>
    <property type="match status" value="1"/>
</dbReference>
<dbReference type="PANTHER" id="PTHR18834:SF2">
    <property type="entry name" value="STEROID RECEPTOR RNA ACTIVATOR 1"/>
    <property type="match status" value="1"/>
</dbReference>
<dbReference type="Pfam" id="PF07304">
    <property type="entry name" value="SRA1"/>
    <property type="match status" value="1"/>
</dbReference>
<sequence>MAELYVKPGNKERGWNDPPQFSYGLQTQAGGPRRSLLTKRVAAPQDGSPRVPASETSPGPPPMGPPPPSSKAPRSPPVGSGPASGVEPTSFPVESEAVMEDVLRPLEQALEDCRGHTRKQVCDDISRRLALLQEQWAGGKLSIPVKKRMALLVQELSSHRWDAADDIHRSLMVDHVTEVSQWMVGVKRLIAEKRSLFSEEAANEEKSAATAEKNHTIPGFQQAS</sequence>
<organism>
    <name type="scientific">Homo sapiens</name>
    <name type="common">Human</name>
    <dbReference type="NCBI Taxonomy" id="9606"/>
    <lineage>
        <taxon>Eukaryota</taxon>
        <taxon>Metazoa</taxon>
        <taxon>Chordata</taxon>
        <taxon>Craniata</taxon>
        <taxon>Vertebrata</taxon>
        <taxon>Euteleostomi</taxon>
        <taxon>Mammalia</taxon>
        <taxon>Eutheria</taxon>
        <taxon>Euarchontoglires</taxon>
        <taxon>Primates</taxon>
        <taxon>Haplorrhini</taxon>
        <taxon>Catarrhini</taxon>
        <taxon>Hominidae</taxon>
        <taxon>Homo</taxon>
    </lineage>
</organism>
<proteinExistence type="evidence at protein level"/>
<accession>Q9HD15</accession>
<accession>Q6NVU9</accession>
<accession>Q8IXM1</accession>
<accession>Q9HD13</accession>
<accession>Q9HD14</accession>
<evidence type="ECO:0000250" key="1">
    <source>
        <dbReference type="UniProtKB" id="Q6QGW5"/>
    </source>
</evidence>
<evidence type="ECO:0000250" key="2">
    <source>
        <dbReference type="UniProtKB" id="Q80VJ2"/>
    </source>
</evidence>
<evidence type="ECO:0000256" key="3">
    <source>
        <dbReference type="SAM" id="MobiDB-lite"/>
    </source>
</evidence>
<evidence type="ECO:0000269" key="4">
    <source>
    </source>
</evidence>
<evidence type="ECO:0000269" key="5">
    <source>
    </source>
</evidence>
<evidence type="ECO:0000269" key="6">
    <source>
    </source>
</evidence>
<evidence type="ECO:0000269" key="7">
    <source>
    </source>
</evidence>
<evidence type="ECO:0000269" key="8">
    <source>
    </source>
</evidence>
<evidence type="ECO:0000269" key="9">
    <source>
    </source>
</evidence>
<evidence type="ECO:0000305" key="10"/>
<evidence type="ECO:0000312" key="11">
    <source>
        <dbReference type="EMBL" id="AAG02114.1"/>
    </source>
</evidence>
<evidence type="ECO:0000312" key="12">
    <source>
        <dbReference type="EMBL" id="AAH40043.2"/>
    </source>
</evidence>
<evidence type="ECO:0000312" key="13">
    <source>
        <dbReference type="HGNC" id="HGNC:11281"/>
    </source>
</evidence>
<evidence type="ECO:0007744" key="14">
    <source>
    </source>
</evidence>
<evidence type="ECO:0007744" key="15">
    <source>
    </source>
</evidence>
<evidence type="ECO:0007744" key="16">
    <source>
    </source>
</evidence>
<evidence type="ECO:0007829" key="17">
    <source>
        <dbReference type="PDB" id="2MGX"/>
    </source>
</evidence>
<evidence type="ECO:0007829" key="18">
    <source>
        <dbReference type="PDB" id="4NBO"/>
    </source>
</evidence>
<feature type="chain" id="PRO_0000234105" description="Steroid receptor RNA activator 1">
    <location>
        <begin position="1"/>
        <end position="224"/>
    </location>
</feature>
<feature type="region of interest" description="Disordered" evidence="3">
    <location>
        <begin position="1"/>
        <end position="90"/>
    </location>
</feature>
<feature type="region of interest" description="Disordered" evidence="3">
    <location>
        <begin position="201"/>
        <end position="224"/>
    </location>
</feature>
<feature type="compositionally biased region" description="Pro residues" evidence="3">
    <location>
        <begin position="58"/>
        <end position="76"/>
    </location>
</feature>
<feature type="compositionally biased region" description="Basic and acidic residues" evidence="3">
    <location>
        <begin position="201"/>
        <end position="215"/>
    </location>
</feature>
<feature type="modified residue" description="Phosphoserine" evidence="14">
    <location>
        <position position="48"/>
    </location>
</feature>
<feature type="modified residue" description="Phosphoserine" evidence="15">
    <location>
        <position position="57"/>
    </location>
</feature>
<feature type="modified residue" description="Phosphoserine" evidence="16">
    <location>
        <position position="75"/>
    </location>
</feature>
<feature type="sequence variant" id="VAR_052060" description="In dbSNP:rs35610885.">
    <original>Q</original>
    <variation>E</variation>
    <location>
        <position position="20"/>
    </location>
</feature>
<feature type="sequence conflict" description="In Ref. 1; AAG02115." evidence="10" ref="1">
    <original>T</original>
    <variation>I</variation>
    <location>
        <position position="38"/>
    </location>
</feature>
<feature type="sequence conflict" description="In Ref. 1; AAG02116 and 2; AAL55868." evidence="10" ref="1 2">
    <original>V</original>
    <variation>RL</variation>
    <location>
        <position position="98"/>
    </location>
</feature>
<feature type="helix" evidence="18">
    <location>
        <begin position="99"/>
        <end position="112"/>
    </location>
</feature>
<feature type="turn" evidence="18">
    <location>
        <begin position="113"/>
        <end position="116"/>
    </location>
</feature>
<feature type="helix" evidence="18">
    <location>
        <begin position="119"/>
        <end position="138"/>
    </location>
</feature>
<feature type="helix" evidence="18">
    <location>
        <begin position="143"/>
        <end position="157"/>
    </location>
</feature>
<feature type="helix" evidence="18">
    <location>
        <begin position="161"/>
        <end position="179"/>
    </location>
</feature>
<feature type="turn" evidence="18">
    <location>
        <begin position="180"/>
        <end position="182"/>
    </location>
</feature>
<feature type="helix" evidence="18">
    <location>
        <begin position="183"/>
        <end position="197"/>
    </location>
</feature>
<feature type="turn" evidence="17">
    <location>
        <begin position="209"/>
        <end position="211"/>
    </location>
</feature>
<feature type="strand" evidence="17">
    <location>
        <begin position="219"/>
        <end position="222"/>
    </location>
</feature>
<keyword id="KW-0002">3D-structure</keyword>
<keyword id="KW-0010">Activator</keyword>
<keyword id="KW-0053">Apoptosis</keyword>
<keyword id="KW-0963">Cytoplasm</keyword>
<keyword id="KW-0539">Nucleus</keyword>
<keyword id="KW-0597">Phosphoprotein</keyword>
<keyword id="KW-1267">Proteomics identification</keyword>
<keyword id="KW-0675">Receptor</keyword>
<keyword id="KW-1185">Reference proteome</keyword>
<keyword id="KW-0687">Ribonucleoprotein</keyword>
<keyword id="KW-0804">Transcription</keyword>
<keyword id="KW-0805">Transcription regulation</keyword>
<gene>
    <name evidence="13" type="primary">SRA1</name>
    <name type="ORF">PP7684</name>
</gene>
<reference evidence="10 11" key="1">
    <citation type="journal article" date="2003" name="Biochem. Biophys. Res. Commun.">
        <title>Identification of new human coding steroid receptor RNA activator isoforms.</title>
        <authorList>
            <person name="Emberley E."/>
            <person name="Huang G.-J."/>
            <person name="Hamedani M.K."/>
            <person name="Czosnek A."/>
            <person name="Ali D."/>
            <person name="Grolla A."/>
            <person name="Lu B."/>
            <person name="Watson P.H."/>
            <person name="Murphy L.C."/>
            <person name="Leygue E."/>
        </authorList>
    </citation>
    <scope>NUCLEOTIDE SEQUENCE [MRNA]</scope>
    <scope>SUBCELLULAR LOCATION</scope>
    <scope>TISSUE SPECIFICITY</scope>
    <source>
        <tissue evidence="11">Mammary gland</tissue>
    </source>
</reference>
<reference key="2">
    <citation type="journal article" date="2004" name="Proc. Natl. Acad. Sci. U.S.A.">
        <title>Large-scale cDNA transfection screening for genes related to cancer development and progression.</title>
        <authorList>
            <person name="Wan D."/>
            <person name="Gong Y."/>
            <person name="Qin W."/>
            <person name="Zhang P."/>
            <person name="Li J."/>
            <person name="Wei L."/>
            <person name="Zhou X."/>
            <person name="Li H."/>
            <person name="Qiu X."/>
            <person name="Zhong F."/>
            <person name="He L."/>
            <person name="Yu J."/>
            <person name="Yao G."/>
            <person name="Jiang H."/>
            <person name="Qian L."/>
            <person name="Yu Y."/>
            <person name="Shu H."/>
            <person name="Chen X."/>
            <person name="Xu H."/>
            <person name="Guo M."/>
            <person name="Pan Z."/>
            <person name="Chen Y."/>
            <person name="Ge C."/>
            <person name="Yang S."/>
            <person name="Gu J."/>
        </authorList>
    </citation>
    <scope>NUCLEOTIDE SEQUENCE [LARGE SCALE MRNA]</scope>
</reference>
<reference evidence="10" key="3">
    <citation type="journal article" date="1999" name="Cell">
        <title>A steroid receptor coactivator, SRA, functions as an RNA and is present in an SRC-1 complex.</title>
        <authorList>
            <person name="Lanz R.B."/>
            <person name="McKenna N.J."/>
            <person name="Onate S.A."/>
            <person name="Albrecht U."/>
            <person name="Wong J."/>
            <person name="Tsai S.Y."/>
            <person name="Tsai M.-J."/>
            <person name="O'Malley B.W."/>
        </authorList>
    </citation>
    <scope>NUCLEOTIDE SEQUENCE [MRNA] OF 2-224</scope>
    <scope>FUNCTION</scope>
    <scope>IDENTIFICATION IN A RIBONUCLEOPROTEIN COMPLEX WITH NCOA1</scope>
    <scope>TISSUE SPECIFICITY</scope>
</reference>
<reference evidence="10 12" key="4">
    <citation type="journal article" date="2004" name="Genome Res.">
        <title>The status, quality, and expansion of the NIH full-length cDNA project: the Mammalian Gene Collection (MGC).</title>
        <authorList>
            <consortium name="The MGC Project Team"/>
        </authorList>
    </citation>
    <scope>NUCLEOTIDE SEQUENCE [LARGE SCALE MRNA] OF 10-224</scope>
    <source>
        <tissue evidence="12">Lymph</tissue>
    </source>
</reference>
<reference evidence="10" key="5">
    <citation type="journal article" date="2003" name="J. Steroid Biochem. Mol. Biol.">
        <title>Ligand-independent coactivation of ERalpha AF-1 by steroid receptor RNA activator (SRA) via MAPK activation.</title>
        <authorList>
            <person name="Deblois G."/>
            <person name="Giguere V."/>
        </authorList>
    </citation>
    <scope>FUNCTION</scope>
</reference>
<reference evidence="10" key="6">
    <citation type="journal article" date="2003" name="Mol. Cell. Biol.">
        <title>Steroid receptor RNA activator stimulates proliferation as well as apoptosis in vivo.</title>
        <authorList>
            <person name="Lanz R.B."/>
            <person name="Chua S.S."/>
            <person name="Barron N."/>
            <person name="Soder B.M."/>
            <person name="DeMayo F."/>
            <person name="O'Malley B.W."/>
        </authorList>
    </citation>
    <scope>FUNCTION</scope>
    <scope>TISSUE SPECIFICITY</scope>
</reference>
<reference evidence="10" key="7">
    <citation type="journal article" date="2004" name="Biochem. Biophys. Res. Commun.">
        <title>SRA coactivation of estrogen receptor-alpha is phosphorylation-independent, and enhances 4-hydroxytamoxifen agonist activity.</title>
        <authorList>
            <person name="Coleman K.M."/>
            <person name="Lam V."/>
            <person name="Jaber B.M."/>
            <person name="Lanz R.B."/>
            <person name="Smith C.L."/>
        </authorList>
    </citation>
    <scope>FUNCTION</scope>
</reference>
<reference evidence="10" key="8">
    <citation type="journal article" date="2004" name="FEBS Lett.">
        <title>The steroid receptor RNA activator is the first functional RNA encoding a protein.</title>
        <authorList>
            <person name="Chooniedass-Kothari S."/>
            <person name="Emberley E."/>
            <person name="Hamedani M.K."/>
            <person name="Troup S."/>
            <person name="Wang X."/>
            <person name="Czosnek A."/>
            <person name="Hube F."/>
            <person name="Mutawe M."/>
            <person name="Watson P.H."/>
            <person name="Leygue E."/>
        </authorList>
    </citation>
    <scope>FUNCTION</scope>
</reference>
<reference key="9">
    <citation type="journal article" date="2008" name="Proc. Natl. Acad. Sci. U.S.A.">
        <title>A quantitative atlas of mitotic phosphorylation.</title>
        <authorList>
            <person name="Dephoure N."/>
            <person name="Zhou C."/>
            <person name="Villen J."/>
            <person name="Beausoleil S.A."/>
            <person name="Bakalarski C.E."/>
            <person name="Elledge S.J."/>
            <person name="Gygi S.P."/>
        </authorList>
    </citation>
    <scope>PHOSPHORYLATION [LARGE SCALE ANALYSIS] AT SER-48</scope>
    <scope>IDENTIFICATION BY MASS SPECTROMETRY [LARGE SCALE ANALYSIS]</scope>
    <source>
        <tissue>Cervix carcinoma</tissue>
    </source>
</reference>
<reference key="10">
    <citation type="journal article" date="2010" name="Sci. Signal.">
        <title>Quantitative phosphoproteomics reveals widespread full phosphorylation site occupancy during mitosis.</title>
        <authorList>
            <person name="Olsen J.V."/>
            <person name="Vermeulen M."/>
            <person name="Santamaria A."/>
            <person name="Kumar C."/>
            <person name="Miller M.L."/>
            <person name="Jensen L.J."/>
            <person name="Gnad F."/>
            <person name="Cox J."/>
            <person name="Jensen T.S."/>
            <person name="Nigg E.A."/>
            <person name="Brunak S."/>
            <person name="Mann M."/>
        </authorList>
    </citation>
    <scope>IDENTIFICATION BY MASS SPECTROMETRY [LARGE SCALE ANALYSIS]</scope>
    <source>
        <tissue>Cervix carcinoma</tissue>
    </source>
</reference>
<reference key="11">
    <citation type="journal article" date="2011" name="BMC Syst. Biol.">
        <title>Initial characterization of the human central proteome.</title>
        <authorList>
            <person name="Burkard T.R."/>
            <person name="Planyavsky M."/>
            <person name="Kaupe I."/>
            <person name="Breitwieser F.P."/>
            <person name="Buerckstuemmer T."/>
            <person name="Bennett K.L."/>
            <person name="Superti-Furga G."/>
            <person name="Colinge J."/>
        </authorList>
    </citation>
    <scope>IDENTIFICATION BY MASS SPECTROMETRY [LARGE SCALE ANALYSIS]</scope>
</reference>
<reference key="12">
    <citation type="journal article" date="2013" name="J. Proteome Res.">
        <title>Toward a comprehensive characterization of a human cancer cell phosphoproteome.</title>
        <authorList>
            <person name="Zhou H."/>
            <person name="Di Palma S."/>
            <person name="Preisinger C."/>
            <person name="Peng M."/>
            <person name="Polat A.N."/>
            <person name="Heck A.J."/>
            <person name="Mohammed S."/>
        </authorList>
    </citation>
    <scope>PHOSPHORYLATION [LARGE SCALE ANALYSIS] AT SER-57</scope>
    <scope>IDENTIFICATION BY MASS SPECTROMETRY [LARGE SCALE ANALYSIS]</scope>
    <source>
        <tissue>Cervix carcinoma</tissue>
        <tissue>Erythroleukemia</tissue>
    </source>
</reference>
<reference key="13">
    <citation type="journal article" date="2014" name="J. Proteomics">
        <title>An enzyme assisted RP-RPLC approach for in-depth analysis of human liver phosphoproteome.</title>
        <authorList>
            <person name="Bian Y."/>
            <person name="Song C."/>
            <person name="Cheng K."/>
            <person name="Dong M."/>
            <person name="Wang F."/>
            <person name="Huang J."/>
            <person name="Sun D."/>
            <person name="Wang L."/>
            <person name="Ye M."/>
            <person name="Zou H."/>
        </authorList>
    </citation>
    <scope>PHOSPHORYLATION [LARGE SCALE ANALYSIS] AT SER-75</scope>
    <scope>IDENTIFICATION BY MASS SPECTROMETRY [LARGE SCALE ANALYSIS]</scope>
    <source>
        <tissue>Liver</tissue>
    </source>
</reference>
<protein>
    <recommendedName>
        <fullName evidence="10">Steroid receptor RNA activator 1</fullName>
    </recommendedName>
    <alternativeName>
        <fullName>Steroid receptor RNA activator protein</fullName>
        <shortName>SRAP</shortName>
    </alternativeName>
</protein>
<comment type="function">
    <text evidence="4 6 7 8 9">Functional RNA which acts as a transcriptional coactivator that selectively enhances steroid receptor-mediated transactivation ligand-independently through a mechanism involving the modulating N-terminal domain (AF-1) of steroid receptors. Also mediates transcriptional coactivation of steroid receptors ligand-dependently through the steroid-binding domain (AF-2). Enhances cellular proliferation and differentiation and promotes apoptosis in vivo. May play a role in tumorigenesis.</text>
</comment>
<comment type="subunit">
    <text evidence="1 2 4">SRA1 RNA exists in a ribonucleoprotein complex containing NCOA1. The RNA also forms a complex with PUS1 and RARG in the nucleus. Interacts with AR.</text>
</comment>
<comment type="interaction">
    <interactant intactId="EBI-727136">
        <id>Q9HD15</id>
    </interactant>
    <interactant intactId="EBI-301821">
        <id>Q92769</id>
        <label>HDAC2</label>
    </interactant>
    <organismsDiffer>false</organismsDiffer>
    <experiments>2</experiments>
</comment>
<comment type="subcellular location">
    <subcellularLocation>
        <location evidence="5">Nucleus</location>
    </subcellularLocation>
    <subcellularLocation>
        <location evidence="5">Cytoplasm</location>
    </subcellularLocation>
</comment>
<comment type="tissue specificity">
    <text evidence="4 5 7">Highly expressed in liver and skeletal muscle and to a lesser extent in brain. Also expressed in both normal and tumorigenic breast epithelial cell lines. Significantly up-regulated in human tumors of the breast, ovary, and uterus.</text>
</comment>
<comment type="miscellaneous">
    <text evidence="5 8">Appears to be the first example of a new class of functional RNAs also able to encode a protein.</text>
</comment>
<comment type="similarity">
    <text evidence="10">Belongs to the SRA1 family.</text>
</comment>
<comment type="sequence caution" evidence="10">
    <conflict type="erroneous initiation">
        <sequence resource="EMBL-CDS" id="AAG02114"/>
    </conflict>
    <text>Extended N-terminus.</text>
</comment>
<comment type="sequence caution" evidence="10">
    <conflict type="erroneous initiation">
        <sequence resource="EMBL-CDS" id="AAG02115"/>
    </conflict>
    <text>Extended N-terminus.</text>
</comment>
<comment type="sequence caution" evidence="10">
    <conflict type="erroneous initiation">
        <sequence resource="EMBL-CDS" id="AAG02116"/>
    </conflict>
    <text>Extended N-terminus.</text>
</comment>
<comment type="sequence caution" evidence="10">
    <conflict type="frameshift">
        <sequence resource="EMBL-CDS" id="AAH40043"/>
    </conflict>
</comment>
<comment type="sequence caution" evidence="10">
    <conflict type="erroneous initiation">
        <sequence resource="EMBL-CDS" id="AAL55868"/>
    </conflict>
    <text>Extended N-terminus.</text>
</comment>